<keyword id="KW-0028">Amino-acid biosynthesis</keyword>
<keyword id="KW-0057">Aromatic amino acid biosynthesis</keyword>
<keyword id="KW-0456">Lyase</keyword>
<keyword id="KW-0663">Pyridoxal phosphate</keyword>
<keyword id="KW-0822">Tryptophan biosynthesis</keyword>
<reference key="1">
    <citation type="submission" date="2007-06" db="EMBL/GenBank/DDBJ databases">
        <title>Complete sequence of Methanococcus aeolicus Nankai-3.</title>
        <authorList>
            <consortium name="US DOE Joint Genome Institute"/>
            <person name="Copeland A."/>
            <person name="Lucas S."/>
            <person name="Lapidus A."/>
            <person name="Barry K."/>
            <person name="Glavina del Rio T."/>
            <person name="Dalin E."/>
            <person name="Tice H."/>
            <person name="Pitluck S."/>
            <person name="Chain P."/>
            <person name="Malfatti S."/>
            <person name="Shin M."/>
            <person name="Vergez L."/>
            <person name="Schmutz J."/>
            <person name="Larimer F."/>
            <person name="Land M."/>
            <person name="Hauser L."/>
            <person name="Kyrpides N."/>
            <person name="Lykidis A."/>
            <person name="Sieprawska-Lupa M."/>
            <person name="Whitman W.B."/>
            <person name="Richardson P."/>
        </authorList>
    </citation>
    <scope>NUCLEOTIDE SEQUENCE [LARGE SCALE GENOMIC DNA]</scope>
    <source>
        <strain>ATCC BAA-1280 / DSM 17508 / OCM 812 / Nankai-3</strain>
    </source>
</reference>
<organism>
    <name type="scientific">Methanococcus aeolicus (strain ATCC BAA-1280 / DSM 17508 / OCM 812 / Nankai-3)</name>
    <dbReference type="NCBI Taxonomy" id="419665"/>
    <lineage>
        <taxon>Archaea</taxon>
        <taxon>Methanobacteriati</taxon>
        <taxon>Methanobacteriota</taxon>
        <taxon>Methanomada group</taxon>
        <taxon>Methanococci</taxon>
        <taxon>Methanococcales</taxon>
        <taxon>Methanococcaceae</taxon>
        <taxon>Methanococcus</taxon>
    </lineage>
</organism>
<comment type="function">
    <text evidence="1">The beta subunit is responsible for the synthesis of L-tryptophan from indole and L-serine.</text>
</comment>
<comment type="catalytic activity">
    <reaction evidence="1">
        <text>(1S,2R)-1-C-(indol-3-yl)glycerol 3-phosphate + L-serine = D-glyceraldehyde 3-phosphate + L-tryptophan + H2O</text>
        <dbReference type="Rhea" id="RHEA:10532"/>
        <dbReference type="ChEBI" id="CHEBI:15377"/>
        <dbReference type="ChEBI" id="CHEBI:33384"/>
        <dbReference type="ChEBI" id="CHEBI:57912"/>
        <dbReference type="ChEBI" id="CHEBI:58866"/>
        <dbReference type="ChEBI" id="CHEBI:59776"/>
        <dbReference type="EC" id="4.2.1.20"/>
    </reaction>
</comment>
<comment type="cofactor">
    <cofactor evidence="1">
        <name>pyridoxal 5'-phosphate</name>
        <dbReference type="ChEBI" id="CHEBI:597326"/>
    </cofactor>
</comment>
<comment type="pathway">
    <text evidence="1">Amino-acid biosynthesis; L-tryptophan biosynthesis; L-tryptophan from chorismate: step 5/5.</text>
</comment>
<comment type="subunit">
    <text evidence="1">Tetramer of two alpha and two beta chains.</text>
</comment>
<comment type="similarity">
    <text evidence="1">Belongs to the TrpB family.</text>
</comment>
<sequence length="389" mass="42775">MEYKFGEYGGQYVPEVLMPSLKELEKAYKKYKDDPEFKEELEYYLKQYAGRETPLYFAENLTKKMGGAKIYLKREDLLLGGAHKINNSLGQALLAKRIGKTRIIAETGAGEHGLSTAMVGALFGLKAKIYMGAVDVERQKLNVYKMRLHGAEVHAVQSGSKTLKDAINEALRDWVETFEDTHYIIGSAVGPYPFPSMVRDFQSVIGKEAKKQILEAEGRLPDSIVACVGGGSNSIGIFNEFKQDKEVKLIGVEAAGEGLDTDRHGAAILKGKKGVLHGMLSKFLQDDDGQIAETYSISAGLDYPGVGPEHAYLDEIKRVEYAGITDVEALDAFSTLSKTEGIIPALESSHAVAHGMKIAKEMDKDEIIIINLSGRGDKDIHTVMNFIEF</sequence>
<dbReference type="EC" id="4.2.1.20" evidence="1"/>
<dbReference type="EMBL" id="CP000743">
    <property type="protein sequence ID" value="ABR56697.1"/>
    <property type="molecule type" value="Genomic_DNA"/>
</dbReference>
<dbReference type="RefSeq" id="WP_011973829.1">
    <property type="nucleotide sequence ID" value="NC_009635.1"/>
</dbReference>
<dbReference type="SMR" id="A6UW25"/>
<dbReference type="STRING" id="419665.Maeo_1120"/>
<dbReference type="GeneID" id="5327416"/>
<dbReference type="KEGG" id="mae:Maeo_1120"/>
<dbReference type="eggNOG" id="arCOG01433">
    <property type="taxonomic scope" value="Archaea"/>
</dbReference>
<dbReference type="HOGENOM" id="CLU_016734_3_1_2"/>
<dbReference type="OrthoDB" id="371827at2157"/>
<dbReference type="UniPathway" id="UPA00035">
    <property type="reaction ID" value="UER00044"/>
</dbReference>
<dbReference type="Proteomes" id="UP000001106">
    <property type="component" value="Chromosome"/>
</dbReference>
<dbReference type="GO" id="GO:0005737">
    <property type="term" value="C:cytoplasm"/>
    <property type="evidence" value="ECO:0007669"/>
    <property type="project" value="TreeGrafter"/>
</dbReference>
<dbReference type="GO" id="GO:0004834">
    <property type="term" value="F:tryptophan synthase activity"/>
    <property type="evidence" value="ECO:0007669"/>
    <property type="project" value="UniProtKB-UniRule"/>
</dbReference>
<dbReference type="CDD" id="cd06446">
    <property type="entry name" value="Trp-synth_B"/>
    <property type="match status" value="1"/>
</dbReference>
<dbReference type="FunFam" id="3.40.50.1100:FF:000001">
    <property type="entry name" value="Tryptophan synthase beta chain"/>
    <property type="match status" value="1"/>
</dbReference>
<dbReference type="FunFam" id="3.40.50.1100:FF:000004">
    <property type="entry name" value="Tryptophan synthase beta chain"/>
    <property type="match status" value="1"/>
</dbReference>
<dbReference type="Gene3D" id="3.40.50.1100">
    <property type="match status" value="2"/>
</dbReference>
<dbReference type="HAMAP" id="MF_00133">
    <property type="entry name" value="Trp_synth_beta"/>
    <property type="match status" value="1"/>
</dbReference>
<dbReference type="InterPro" id="IPR006654">
    <property type="entry name" value="Trp_synth_beta"/>
</dbReference>
<dbReference type="InterPro" id="IPR023026">
    <property type="entry name" value="Trp_synth_beta/beta-like"/>
</dbReference>
<dbReference type="InterPro" id="IPR001926">
    <property type="entry name" value="TrpB-like_PALP"/>
</dbReference>
<dbReference type="InterPro" id="IPR036052">
    <property type="entry name" value="TrpB-like_PALP_sf"/>
</dbReference>
<dbReference type="NCBIfam" id="TIGR00263">
    <property type="entry name" value="trpB"/>
    <property type="match status" value="1"/>
</dbReference>
<dbReference type="PANTHER" id="PTHR48077:SF3">
    <property type="entry name" value="TRYPTOPHAN SYNTHASE"/>
    <property type="match status" value="1"/>
</dbReference>
<dbReference type="PANTHER" id="PTHR48077">
    <property type="entry name" value="TRYPTOPHAN SYNTHASE-RELATED"/>
    <property type="match status" value="1"/>
</dbReference>
<dbReference type="Pfam" id="PF00291">
    <property type="entry name" value="PALP"/>
    <property type="match status" value="1"/>
</dbReference>
<dbReference type="PIRSF" id="PIRSF001413">
    <property type="entry name" value="Trp_syn_beta"/>
    <property type="match status" value="1"/>
</dbReference>
<dbReference type="SUPFAM" id="SSF53686">
    <property type="entry name" value="Tryptophan synthase beta subunit-like PLP-dependent enzymes"/>
    <property type="match status" value="1"/>
</dbReference>
<proteinExistence type="inferred from homology"/>
<protein>
    <recommendedName>
        <fullName evidence="1">Tryptophan synthase beta chain</fullName>
        <ecNumber evidence="1">4.2.1.20</ecNumber>
    </recommendedName>
</protein>
<feature type="chain" id="PRO_1000018357" description="Tryptophan synthase beta chain">
    <location>
        <begin position="1"/>
        <end position="389"/>
    </location>
</feature>
<feature type="modified residue" description="N6-(pyridoxal phosphate)lysine" evidence="1">
    <location>
        <position position="84"/>
    </location>
</feature>
<evidence type="ECO:0000255" key="1">
    <source>
        <dbReference type="HAMAP-Rule" id="MF_00133"/>
    </source>
</evidence>
<accession>A6UW25</accession>
<gene>
    <name evidence="1" type="primary">trpB</name>
    <name type="ordered locus">Maeo_1120</name>
</gene>
<name>TRPB_META3</name>